<name>MTCA2_MYCTU</name>
<evidence type="ECO:0000269" key="1">
    <source>
    </source>
</evidence>
<evidence type="ECO:0000269" key="2">
    <source>
    </source>
</evidence>
<evidence type="ECO:0000269" key="3">
    <source>
    </source>
</evidence>
<evidence type="ECO:0000305" key="4"/>
<evidence type="ECO:0007744" key="5">
    <source>
        <dbReference type="PDB" id="1YM3"/>
    </source>
</evidence>
<evidence type="ECO:0007744" key="6">
    <source>
        <dbReference type="PDB" id="2A5V"/>
    </source>
</evidence>
<evidence type="ECO:0007829" key="7">
    <source>
        <dbReference type="PDB" id="1YM3"/>
    </source>
</evidence>
<evidence type="ECO:0007829" key="8">
    <source>
        <dbReference type="PDB" id="2A5V"/>
    </source>
</evidence>
<keyword id="KW-0002">3D-structure</keyword>
<keyword id="KW-0456">Lyase</keyword>
<keyword id="KW-0479">Metal-binding</keyword>
<keyword id="KW-1185">Reference proteome</keyword>
<keyword id="KW-0862">Zinc</keyword>
<comment type="function">
    <text evidence="1">Catalyzes the reversible hydration of carbon dioxide to form bicarbonate.</text>
</comment>
<comment type="catalytic activity">
    <reaction evidence="1">
        <text>hydrogencarbonate + H(+) = CO2 + H2O</text>
        <dbReference type="Rhea" id="RHEA:10748"/>
        <dbReference type="ChEBI" id="CHEBI:15377"/>
        <dbReference type="ChEBI" id="CHEBI:15378"/>
        <dbReference type="ChEBI" id="CHEBI:16526"/>
        <dbReference type="ChEBI" id="CHEBI:17544"/>
        <dbReference type="EC" id="4.2.1.1"/>
    </reaction>
</comment>
<comment type="cofactor">
    <cofactor evidence="1 2">
        <name>Zn(2+)</name>
        <dbReference type="ChEBI" id="CHEBI:29105"/>
    </cofactor>
    <text evidence="1 2">Binds 1 zinc ion per subunit.</text>
</comment>
<comment type="activity regulation">
    <text evidence="3">Inhibited by sulfonamides and sulfamates.</text>
</comment>
<comment type="biophysicochemical properties">
    <phDependence>
        <text evidence="2">Active at pH 8.4 and inactive at pH 7.5.</text>
    </phDependence>
</comment>
<comment type="subunit">
    <text evidence="1 2">Homotetramer at pH 8.4 and homodimer at pH 7.4.</text>
</comment>
<comment type="similarity">
    <text evidence="4">Belongs to the beta-class carbonic anhydrase family.</text>
</comment>
<gene>
    <name type="primary">mtcA2</name>
    <name type="synonym">canB</name>
    <name type="synonym">cynT</name>
    <name type="ordered locus">Rv3588c</name>
</gene>
<protein>
    <recommendedName>
        <fullName>Carbonic anhydrase 2</fullName>
        <shortName>Beta-CA 2</shortName>
        <ecNumber evidence="1">4.2.1.1</ecNumber>
    </recommendedName>
    <alternativeName>
        <fullName>Carbonate dehydratase 2</fullName>
    </alternativeName>
    <alternativeName>
        <fullName>mtCA 2</fullName>
    </alternativeName>
</protein>
<accession>P9WPJ9</accession>
<accession>L0TFY5</accession>
<accession>O53573</accession>
<accession>Q7D582</accession>
<sequence>MPNTNPVAAWKALKEGNERFVAGRPQHPSQSVDHRAGLAAGQKPTAVIFGCADSRVAAEIIFDQGLGDMFVVRTAGHVIDSAVLGSIEYAVTVLNVPLIVVLGHDSCGAVNAALAAINDGTLPGGYVRDVVERVAPSVLLGRRDGLSRVDEFEQRHVHETVAILMARSSAISERIAGGSLAIVGVTYQLDDGRAVLRDHIGNIGEEV</sequence>
<organism>
    <name type="scientific">Mycobacterium tuberculosis (strain ATCC 25618 / H37Rv)</name>
    <dbReference type="NCBI Taxonomy" id="83332"/>
    <lineage>
        <taxon>Bacteria</taxon>
        <taxon>Bacillati</taxon>
        <taxon>Actinomycetota</taxon>
        <taxon>Actinomycetes</taxon>
        <taxon>Mycobacteriales</taxon>
        <taxon>Mycobacteriaceae</taxon>
        <taxon>Mycobacterium</taxon>
        <taxon>Mycobacterium tuberculosis complex</taxon>
    </lineage>
</organism>
<feature type="chain" id="PRO_0000396117" description="Carbonic anhydrase 2">
    <location>
        <begin position="1"/>
        <end position="207"/>
    </location>
</feature>
<feature type="binding site" evidence="1 2 5 6">
    <location>
        <position position="51"/>
    </location>
    <ligand>
        <name>Zn(2+)</name>
        <dbReference type="ChEBI" id="CHEBI:29105"/>
    </ligand>
</feature>
<feature type="binding site" evidence="1 5">
    <location>
        <position position="53"/>
    </location>
    <ligand>
        <name>Zn(2+)</name>
        <dbReference type="ChEBI" id="CHEBI:29105"/>
    </ligand>
</feature>
<feature type="binding site" evidence="1 2 5 6">
    <location>
        <position position="104"/>
    </location>
    <ligand>
        <name>Zn(2+)</name>
        <dbReference type="ChEBI" id="CHEBI:29105"/>
    </ligand>
</feature>
<feature type="binding site" evidence="1 2 5 6">
    <location>
        <position position="107"/>
    </location>
    <ligand>
        <name>Zn(2+)</name>
        <dbReference type="ChEBI" id="CHEBI:29105"/>
    </ligand>
</feature>
<feature type="helix" evidence="7">
    <location>
        <begin position="6"/>
        <end position="22"/>
    </location>
</feature>
<feature type="helix" evidence="7">
    <location>
        <begin position="28"/>
        <end position="30"/>
    </location>
</feature>
<feature type="helix" evidence="8">
    <location>
        <begin position="32"/>
        <end position="36"/>
    </location>
</feature>
<feature type="turn" evidence="8">
    <location>
        <begin position="37"/>
        <end position="40"/>
    </location>
</feature>
<feature type="strand" evidence="7">
    <location>
        <begin position="45"/>
        <end position="51"/>
    </location>
</feature>
<feature type="helix" evidence="7">
    <location>
        <begin position="58"/>
        <end position="61"/>
    </location>
</feature>
<feature type="strand" evidence="7">
    <location>
        <begin position="68"/>
        <end position="74"/>
    </location>
</feature>
<feature type="helix" evidence="7">
    <location>
        <begin position="75"/>
        <end position="77"/>
    </location>
</feature>
<feature type="helix" evidence="7">
    <location>
        <begin position="81"/>
        <end position="92"/>
    </location>
</feature>
<feature type="strand" evidence="7">
    <location>
        <begin position="98"/>
        <end position="106"/>
    </location>
</feature>
<feature type="helix" evidence="7">
    <location>
        <begin position="108"/>
        <end position="119"/>
    </location>
</feature>
<feature type="helix" evidence="7">
    <location>
        <begin position="127"/>
        <end position="143"/>
    </location>
</feature>
<feature type="helix" evidence="7">
    <location>
        <begin position="149"/>
        <end position="167"/>
    </location>
</feature>
<feature type="helix" evidence="7">
    <location>
        <begin position="169"/>
        <end position="176"/>
    </location>
</feature>
<feature type="strand" evidence="7">
    <location>
        <begin position="181"/>
        <end position="187"/>
    </location>
</feature>
<feature type="turn" evidence="7">
    <location>
        <begin position="189"/>
        <end position="191"/>
    </location>
</feature>
<feature type="strand" evidence="7">
    <location>
        <begin position="195"/>
        <end position="201"/>
    </location>
</feature>
<proteinExistence type="evidence at protein level"/>
<reference key="1">
    <citation type="journal article" date="1998" name="Nature">
        <title>Deciphering the biology of Mycobacterium tuberculosis from the complete genome sequence.</title>
        <authorList>
            <person name="Cole S.T."/>
            <person name="Brosch R."/>
            <person name="Parkhill J."/>
            <person name="Garnier T."/>
            <person name="Churcher C.M."/>
            <person name="Harris D.E."/>
            <person name="Gordon S.V."/>
            <person name="Eiglmeier K."/>
            <person name="Gas S."/>
            <person name="Barry C.E. III"/>
            <person name="Tekaia F."/>
            <person name="Badcock K."/>
            <person name="Basham D."/>
            <person name="Brown D."/>
            <person name="Chillingworth T."/>
            <person name="Connor R."/>
            <person name="Davies R.M."/>
            <person name="Devlin K."/>
            <person name="Feltwell T."/>
            <person name="Gentles S."/>
            <person name="Hamlin N."/>
            <person name="Holroyd S."/>
            <person name="Hornsby T."/>
            <person name="Jagels K."/>
            <person name="Krogh A."/>
            <person name="McLean J."/>
            <person name="Moule S."/>
            <person name="Murphy L.D."/>
            <person name="Oliver S."/>
            <person name="Osborne J."/>
            <person name="Quail M.A."/>
            <person name="Rajandream M.A."/>
            <person name="Rogers J."/>
            <person name="Rutter S."/>
            <person name="Seeger K."/>
            <person name="Skelton S."/>
            <person name="Squares S."/>
            <person name="Squares R."/>
            <person name="Sulston J.E."/>
            <person name="Taylor K."/>
            <person name="Whitehead S."/>
            <person name="Barrell B.G."/>
        </authorList>
    </citation>
    <scope>NUCLEOTIDE SEQUENCE [LARGE SCALE GENOMIC DNA]</scope>
    <source>
        <strain>ATCC 25618 / H37Rv</strain>
    </source>
</reference>
<reference key="2">
    <citation type="journal article" date="2009" name="J. Med. Chem.">
        <title>Molecular cloning, characterization, and inhibition studies of the Rv1284 beta-carbonic anhydrase from Mycobacterium tuberculosis with sulfonamides and a sulfamate.</title>
        <authorList>
            <person name="Minakuchi T."/>
            <person name="Nishimori I."/>
            <person name="Vullo D."/>
            <person name="Scozzafava A."/>
            <person name="Supuran C.T."/>
        </authorList>
    </citation>
    <scope>NOMENCLATURE</scope>
</reference>
<reference key="3">
    <citation type="journal article" date="2009" name="J. Med. Chem.">
        <title>Discovery of low nanomolar and subnanomolar inhibitors of the mycobacterial beta-carbonic anhydrases Rv1284 and Rv3273.</title>
        <authorList>
            <person name="Guzel O."/>
            <person name="Maresca A."/>
            <person name="Scozzafava A."/>
            <person name="Salman A."/>
            <person name="Balaban A.T."/>
            <person name="Supuran C.T."/>
        </authorList>
    </citation>
    <scope>ACTIVITY REGULATION</scope>
</reference>
<reference key="4">
    <citation type="journal article" date="2011" name="Mol. Cell. Proteomics">
        <title>Proteogenomic analysis of Mycobacterium tuberculosis by high resolution mass spectrometry.</title>
        <authorList>
            <person name="Kelkar D.S."/>
            <person name="Kumar D."/>
            <person name="Kumar P."/>
            <person name="Balakrishnan L."/>
            <person name="Muthusamy B."/>
            <person name="Yadav A.K."/>
            <person name="Shrivastava P."/>
            <person name="Marimuthu A."/>
            <person name="Anand S."/>
            <person name="Sundaram H."/>
            <person name="Kingsbury R."/>
            <person name="Harsha H.C."/>
            <person name="Nair B."/>
            <person name="Prasad T.S."/>
            <person name="Chauhan D.S."/>
            <person name="Katoch K."/>
            <person name="Katoch V.M."/>
            <person name="Kumar P."/>
            <person name="Chaerkady R."/>
            <person name="Ramachandran S."/>
            <person name="Dash D."/>
            <person name="Pandey A."/>
        </authorList>
    </citation>
    <scope>IDENTIFICATION BY MASS SPECTROMETRY [LARGE SCALE ANALYSIS]</scope>
    <source>
        <strain>ATCC 25618 / H37Rv</strain>
    </source>
</reference>
<reference key="5">
    <citation type="journal article" date="2005" name="J. Biol. Chem.">
        <title>Structure and function of carbonic anhydrases from Mycobacterium tuberculosis.</title>
        <authorList>
            <person name="Suarez Covarrubias A."/>
            <person name="Larsson A.M."/>
            <person name="Hogbom M."/>
            <person name="Lindberg J."/>
            <person name="Bergfors T."/>
            <person name="Bjorkelid C."/>
            <person name="Mowbray S.L."/>
            <person name="Unge T."/>
            <person name="Jones T.A."/>
        </authorList>
    </citation>
    <scope>X-RAY CRYSTALLOGRAPHY (1.75 ANGSTROMS) OF 2-207 IN COMPLEX WITH ZINC ION</scope>
    <scope>FUNCTION AS AN CARBONIC ANHYDRASE</scope>
    <scope>CATALYTIC ACTIVITY</scope>
    <scope>COFACTOR</scope>
    <scope>SUBUNIT</scope>
</reference>
<reference key="6">
    <citation type="journal article" date="2006" name="J. Biol. Chem.">
        <title>Structural mechanics of the pH-dependent activity of beta-carbonic anhydrase from Mycobacterium tuberculosis.</title>
        <authorList>
            <person name="Covarrubias A.S."/>
            <person name="Bergfors T."/>
            <person name="Jones T.A."/>
            <person name="Hogbom M."/>
        </authorList>
    </citation>
    <scope>X-RAY CRYSTALLOGRAPHY (1.75 ANGSTROMS) OF 2-207 IN COMPLEX WITH ZINC ION</scope>
    <scope>COFACTOR</scope>
    <scope>BIOPHYSICOCHEMICAL PROPERTIES</scope>
    <scope>SUBUNIT</scope>
</reference>
<dbReference type="EC" id="4.2.1.1" evidence="1"/>
<dbReference type="EMBL" id="AL123456">
    <property type="protein sequence ID" value="CCP46411.1"/>
    <property type="molecule type" value="Genomic_DNA"/>
</dbReference>
<dbReference type="PIR" id="E70804">
    <property type="entry name" value="E70804"/>
</dbReference>
<dbReference type="RefSeq" id="NP_218105.1">
    <property type="nucleotide sequence ID" value="NC_000962.3"/>
</dbReference>
<dbReference type="RefSeq" id="WP_003419492.1">
    <property type="nucleotide sequence ID" value="NZ_NVQJ01000014.1"/>
</dbReference>
<dbReference type="PDB" id="1YM3">
    <property type="method" value="X-ray"/>
    <property type="resolution" value="1.75 A"/>
    <property type="chains" value="A=2-207"/>
</dbReference>
<dbReference type="PDB" id="2A5V">
    <property type="method" value="X-ray"/>
    <property type="resolution" value="2.20 A"/>
    <property type="chains" value="A/B/C/D=2-207"/>
</dbReference>
<dbReference type="PDBsum" id="1YM3"/>
<dbReference type="PDBsum" id="2A5V"/>
<dbReference type="SMR" id="P9WPJ9"/>
<dbReference type="FunCoup" id="P9WPJ9">
    <property type="interactions" value="83"/>
</dbReference>
<dbReference type="STRING" id="83332.Rv3588c"/>
<dbReference type="BindingDB" id="P9WPJ9"/>
<dbReference type="ChEMBL" id="CHEMBL6068"/>
<dbReference type="DrugCentral" id="P9WPJ9"/>
<dbReference type="PaxDb" id="83332-Rv3588c"/>
<dbReference type="DNASU" id="887836"/>
<dbReference type="GeneID" id="45427576"/>
<dbReference type="GeneID" id="887836"/>
<dbReference type="KEGG" id="mtu:Rv3588c"/>
<dbReference type="KEGG" id="mtv:RVBD_3588c"/>
<dbReference type="TubercuList" id="Rv3588c"/>
<dbReference type="eggNOG" id="COG0288">
    <property type="taxonomic scope" value="Bacteria"/>
</dbReference>
<dbReference type="InParanoid" id="P9WPJ9"/>
<dbReference type="OrthoDB" id="9797527at2"/>
<dbReference type="PhylomeDB" id="P9WPJ9"/>
<dbReference type="EvolutionaryTrace" id="P9WPJ9"/>
<dbReference type="Proteomes" id="UP000001584">
    <property type="component" value="Chromosome"/>
</dbReference>
<dbReference type="GO" id="GO:0004089">
    <property type="term" value="F:carbonate dehydratase activity"/>
    <property type="evidence" value="ECO:0000314"/>
    <property type="project" value="UniProtKB"/>
</dbReference>
<dbReference type="GO" id="GO:0008270">
    <property type="term" value="F:zinc ion binding"/>
    <property type="evidence" value="ECO:0000314"/>
    <property type="project" value="UniProtKB"/>
</dbReference>
<dbReference type="GO" id="GO:0015976">
    <property type="term" value="P:carbon utilization"/>
    <property type="evidence" value="ECO:0007669"/>
    <property type="project" value="InterPro"/>
</dbReference>
<dbReference type="CDD" id="cd03378">
    <property type="entry name" value="beta_CA_cladeC"/>
    <property type="match status" value="1"/>
</dbReference>
<dbReference type="FunFam" id="3.40.1050.10:FF:000006">
    <property type="entry name" value="Carbonic anhydrase"/>
    <property type="match status" value="1"/>
</dbReference>
<dbReference type="Gene3D" id="3.40.1050.10">
    <property type="entry name" value="Carbonic anhydrase"/>
    <property type="match status" value="1"/>
</dbReference>
<dbReference type="InterPro" id="IPR001765">
    <property type="entry name" value="Carbonic_anhydrase"/>
</dbReference>
<dbReference type="InterPro" id="IPR015892">
    <property type="entry name" value="Carbonic_anhydrase_CS"/>
</dbReference>
<dbReference type="InterPro" id="IPR036874">
    <property type="entry name" value="Carbonic_anhydrase_sf"/>
</dbReference>
<dbReference type="PANTHER" id="PTHR11002">
    <property type="entry name" value="CARBONIC ANHYDRASE"/>
    <property type="match status" value="1"/>
</dbReference>
<dbReference type="PANTHER" id="PTHR11002:SF79">
    <property type="entry name" value="CARBONIC ANHYDRASE 2"/>
    <property type="match status" value="1"/>
</dbReference>
<dbReference type="Pfam" id="PF00484">
    <property type="entry name" value="Pro_CA"/>
    <property type="match status" value="1"/>
</dbReference>
<dbReference type="SMART" id="SM00947">
    <property type="entry name" value="Pro_CA"/>
    <property type="match status" value="1"/>
</dbReference>
<dbReference type="SUPFAM" id="SSF53056">
    <property type="entry name" value="beta-carbonic anhydrase, cab"/>
    <property type="match status" value="1"/>
</dbReference>
<dbReference type="PROSITE" id="PS00704">
    <property type="entry name" value="PROK_CO2_ANHYDRASE_1"/>
    <property type="match status" value="1"/>
</dbReference>
<dbReference type="PROSITE" id="PS00705">
    <property type="entry name" value="PROK_CO2_ANHYDRASE_2"/>
    <property type="match status" value="1"/>
</dbReference>